<dbReference type="EMBL" id="AB023966">
    <property type="protein sequence ID" value="BAA75465.1"/>
    <property type="molecule type" value="mRNA"/>
</dbReference>
<dbReference type="RefSeq" id="NP_112636.1">
    <property type="nucleotide sequence ID" value="NM_031346.3"/>
</dbReference>
<dbReference type="SMR" id="Q9Z118"/>
<dbReference type="FunCoup" id="Q9Z118">
    <property type="interactions" value="3386"/>
</dbReference>
<dbReference type="STRING" id="10116.ENSRNOP00000069354"/>
<dbReference type="iPTMnet" id="Q9Z118"/>
<dbReference type="PhosphoSitePlus" id="Q9Z118"/>
<dbReference type="jPOST" id="Q9Z118"/>
<dbReference type="PaxDb" id="10116-ENSRNOP00000022107"/>
<dbReference type="GeneID" id="83515"/>
<dbReference type="KEGG" id="rno:83515"/>
<dbReference type="UCSC" id="RGD:621671">
    <property type="organism name" value="rat"/>
</dbReference>
<dbReference type="AGR" id="RGD:621671"/>
<dbReference type="CTD" id="9991"/>
<dbReference type="RGD" id="621671">
    <property type="gene designation" value="Ptbp3"/>
</dbReference>
<dbReference type="VEuPathDB" id="HostDB:ENSRNOG00000016334"/>
<dbReference type="eggNOG" id="KOG1190">
    <property type="taxonomic scope" value="Eukaryota"/>
</dbReference>
<dbReference type="HOGENOM" id="CLU_015171_7_1_1"/>
<dbReference type="InParanoid" id="Q9Z118"/>
<dbReference type="OrthoDB" id="296632at2759"/>
<dbReference type="PhylomeDB" id="Q9Z118"/>
<dbReference type="TreeFam" id="TF319824"/>
<dbReference type="PRO" id="PR:Q9Z118"/>
<dbReference type="Proteomes" id="UP000002494">
    <property type="component" value="Chromosome 5"/>
</dbReference>
<dbReference type="Bgee" id="ENSRNOG00000016334">
    <property type="expression patterns" value="Expressed in ileum and 18 other cell types or tissues"/>
</dbReference>
<dbReference type="ExpressionAtlas" id="Q9Z118">
    <property type="expression patterns" value="baseline and differential"/>
</dbReference>
<dbReference type="GO" id="GO:0005634">
    <property type="term" value="C:nucleus"/>
    <property type="evidence" value="ECO:0000318"/>
    <property type="project" value="GO_Central"/>
</dbReference>
<dbReference type="GO" id="GO:0003729">
    <property type="term" value="F:mRNA binding"/>
    <property type="evidence" value="ECO:0000318"/>
    <property type="project" value="GO_Central"/>
</dbReference>
<dbReference type="GO" id="GO:0003723">
    <property type="term" value="F:RNA binding"/>
    <property type="evidence" value="ECO:0000303"/>
    <property type="project" value="RGD"/>
</dbReference>
<dbReference type="GO" id="GO:0043249">
    <property type="term" value="P:erythrocyte maturation"/>
    <property type="evidence" value="ECO:0007669"/>
    <property type="project" value="UniProtKB-KW"/>
</dbReference>
<dbReference type="GO" id="GO:0006397">
    <property type="term" value="P:mRNA processing"/>
    <property type="evidence" value="ECO:0007669"/>
    <property type="project" value="UniProtKB-KW"/>
</dbReference>
<dbReference type="GO" id="GO:0048025">
    <property type="term" value="P:negative regulation of mRNA splicing, via spliceosome"/>
    <property type="evidence" value="ECO:0000266"/>
    <property type="project" value="RGD"/>
</dbReference>
<dbReference type="GO" id="GO:0033119">
    <property type="term" value="P:negative regulation of RNA splicing"/>
    <property type="evidence" value="ECO:0000266"/>
    <property type="project" value="RGD"/>
</dbReference>
<dbReference type="GO" id="GO:0045595">
    <property type="term" value="P:regulation of cell differentiation"/>
    <property type="evidence" value="ECO:0000315"/>
    <property type="project" value="RGD"/>
</dbReference>
<dbReference type="GO" id="GO:0043484">
    <property type="term" value="P:regulation of RNA splicing"/>
    <property type="evidence" value="ECO:0000318"/>
    <property type="project" value="GO_Central"/>
</dbReference>
<dbReference type="GO" id="GO:0008380">
    <property type="term" value="P:RNA splicing"/>
    <property type="evidence" value="ECO:0007669"/>
    <property type="project" value="UniProtKB-KW"/>
</dbReference>
<dbReference type="CDD" id="cd12779">
    <property type="entry name" value="RRM1_ROD1"/>
    <property type="match status" value="1"/>
</dbReference>
<dbReference type="CDD" id="cd12693">
    <property type="entry name" value="RRM2_PTBP1_like"/>
    <property type="match status" value="1"/>
</dbReference>
<dbReference type="FunFam" id="3.30.70.330:FF:000223">
    <property type="entry name" value="Polypyrimidine tract binding protein 3"/>
    <property type="match status" value="1"/>
</dbReference>
<dbReference type="FunFam" id="3.30.70.330:FF:000036">
    <property type="entry name" value="polypyrimidine tract-binding protein 1 isoform X2"/>
    <property type="match status" value="1"/>
</dbReference>
<dbReference type="FunFam" id="3.30.70.330:FF:000018">
    <property type="entry name" value="Polypyrimidine tract-binding protein 2 isoform 1"/>
    <property type="match status" value="1"/>
</dbReference>
<dbReference type="FunFam" id="3.30.70.330:FF:000032">
    <property type="entry name" value="Polypyrimidine tract-binding protein 2 isoform 1"/>
    <property type="match status" value="1"/>
</dbReference>
<dbReference type="Gene3D" id="3.30.70.330">
    <property type="match status" value="4"/>
</dbReference>
<dbReference type="InterPro" id="IPR006536">
    <property type="entry name" value="HnRNP-L/PTB"/>
</dbReference>
<dbReference type="InterPro" id="IPR012677">
    <property type="entry name" value="Nucleotide-bd_a/b_plait_sf"/>
</dbReference>
<dbReference type="InterPro" id="IPR021790">
    <property type="entry name" value="PTBP1-like_RRM2"/>
</dbReference>
<dbReference type="InterPro" id="IPR035979">
    <property type="entry name" value="RBD_domain_sf"/>
</dbReference>
<dbReference type="InterPro" id="IPR034326">
    <property type="entry name" value="ROD1_RRM1"/>
</dbReference>
<dbReference type="InterPro" id="IPR000504">
    <property type="entry name" value="RRM_dom"/>
</dbReference>
<dbReference type="NCBIfam" id="TIGR01649">
    <property type="entry name" value="hnRNP-L_PTB"/>
    <property type="match status" value="1"/>
</dbReference>
<dbReference type="PANTHER" id="PTHR15592">
    <property type="entry name" value="MATRIN 3/NUCLEAR PROTEIN 220-RELATED"/>
    <property type="match status" value="1"/>
</dbReference>
<dbReference type="Pfam" id="PF00076">
    <property type="entry name" value="RRM_1"/>
    <property type="match status" value="1"/>
</dbReference>
<dbReference type="Pfam" id="PF13893">
    <property type="entry name" value="RRM_5"/>
    <property type="match status" value="1"/>
</dbReference>
<dbReference type="Pfam" id="PF11835">
    <property type="entry name" value="RRM_8"/>
    <property type="match status" value="1"/>
</dbReference>
<dbReference type="SMART" id="SM00360">
    <property type="entry name" value="RRM"/>
    <property type="match status" value="4"/>
</dbReference>
<dbReference type="SUPFAM" id="SSF54928">
    <property type="entry name" value="RNA-binding domain, RBD"/>
    <property type="match status" value="3"/>
</dbReference>
<dbReference type="PROSITE" id="PS50102">
    <property type="entry name" value="RRM"/>
    <property type="match status" value="4"/>
</dbReference>
<feature type="chain" id="PRO_0000081875" description="Polypyrimidine tract-binding protein 3">
    <location>
        <begin position="1"/>
        <end position="523"/>
    </location>
</feature>
<feature type="domain" description="RRM 1" evidence="4">
    <location>
        <begin position="30"/>
        <end position="114"/>
    </location>
</feature>
<feature type="domain" description="RRM 2" evidence="4">
    <location>
        <begin position="153"/>
        <end position="229"/>
    </location>
</feature>
<feature type="domain" description="RRM 3" evidence="4">
    <location>
        <begin position="329"/>
        <end position="403"/>
    </location>
</feature>
<feature type="domain" description="RRM 4" evidence="4">
    <location>
        <begin position="446"/>
        <end position="521"/>
    </location>
</feature>
<feature type="region of interest" description="Disordered" evidence="5">
    <location>
        <begin position="1"/>
        <end position="25"/>
    </location>
</feature>
<feature type="region of interest" description="Disordered" evidence="5">
    <location>
        <begin position="406"/>
        <end position="426"/>
    </location>
</feature>
<feature type="modified residue" description="Phosphotyrosine" evidence="3">
    <location>
        <position position="98"/>
    </location>
</feature>
<feature type="modified residue" description="Phosphothreonine" evidence="3">
    <location>
        <position position="109"/>
    </location>
</feature>
<feature type="modified residue" description="N6-acetyllysine" evidence="2">
    <location>
        <position position="394"/>
    </location>
</feature>
<feature type="modified residue" description="Phosphoserine" evidence="2">
    <location>
        <position position="425"/>
    </location>
</feature>
<feature type="cross-link" description="Glycyl lysine isopeptide (Lys-Gly) (interchain with G-Cter in SUMO2)" evidence="3">
    <location>
        <position position="36"/>
    </location>
</feature>
<feature type="cross-link" description="Glycyl lysine isopeptide (Lys-Gly) (interchain with G-Cter in SUMO2)" evidence="3">
    <location>
        <position position="187"/>
    </location>
</feature>
<comment type="function">
    <text evidence="1">RNA-binding protein that mediates pre-mRNA alternative splicing regulation. Plays a role in the regulation of cell proliferation, differentiation and migration. Positive regulator of EPO-dependent erythropoiesis. Participates in cell differentiation regulation by repressing tissue-specific exons. Promotes Fas exon 6 skipping. Binds RNA, preferentially to both poly(G) and poly(U) (By similarity).</text>
</comment>
<comment type="subunit">
    <text evidence="1">Interacts with THBS4 (via the acidic amphipathic C-terminus).</text>
</comment>
<comment type="tissue specificity">
    <text evidence="6">Detected specifically in spleen, thymus, lungs, and bone marrow.</text>
</comment>
<comment type="developmental stage">
    <text evidence="6">At 18 dpc and P1 expressed predominantly in thymus and liver, and at lower levels in brain, muscle and kidney.</text>
</comment>
<evidence type="ECO:0000250" key="1"/>
<evidence type="ECO:0000250" key="2">
    <source>
        <dbReference type="UniProtKB" id="O95758"/>
    </source>
</evidence>
<evidence type="ECO:0000250" key="3">
    <source>
        <dbReference type="UniProtKB" id="P26599"/>
    </source>
</evidence>
<evidence type="ECO:0000255" key="4">
    <source>
        <dbReference type="PROSITE-ProRule" id="PRU00176"/>
    </source>
</evidence>
<evidence type="ECO:0000256" key="5">
    <source>
        <dbReference type="SAM" id="MobiDB-lite"/>
    </source>
</evidence>
<evidence type="ECO:0000269" key="6">
    <source>
    </source>
</evidence>
<keyword id="KW-0007">Acetylation</keyword>
<keyword id="KW-0221">Differentiation</keyword>
<keyword id="KW-0265">Erythrocyte maturation</keyword>
<keyword id="KW-1017">Isopeptide bond</keyword>
<keyword id="KW-0507">mRNA processing</keyword>
<keyword id="KW-0508">mRNA splicing</keyword>
<keyword id="KW-0597">Phosphoprotein</keyword>
<keyword id="KW-1185">Reference proteome</keyword>
<keyword id="KW-0677">Repeat</keyword>
<keyword id="KW-0678">Repressor</keyword>
<keyword id="KW-0694">RNA-binding</keyword>
<keyword id="KW-0832">Ubl conjugation</keyword>
<proteinExistence type="evidence at transcript level"/>
<gene>
    <name type="primary">Ptbp3</name>
    <name type="synonym">Rod1</name>
</gene>
<reference key="1">
    <citation type="journal article" date="1999" name="Mol. Cell. Biol.">
        <title>Isolation of a mammalian homologue of a fission yeast differentiation regulator.</title>
        <authorList>
            <person name="Yamamoto H."/>
            <person name="Tsukahara K."/>
            <person name="Kanaoka Y."/>
            <person name="Jinno S."/>
            <person name="Okayama H."/>
        </authorList>
    </citation>
    <scope>NUCLEOTIDE SEQUENCE [MRNA]</scope>
    <scope>TISSUE SPECIFICITY</scope>
    <scope>DEVELOPMENTAL STAGE</scope>
    <source>
        <tissue>Kidney</tissue>
    </source>
</reference>
<sequence length="523" mass="56716">MNNSTSAGVYANGNDNKKFKGDRPPCSPSRVLHLRKIPCDVTEAEVISLGLPFGKVTNLLMLKGKSQAFLEMASEEAAVTMINYYTPVTPHLRSQPVYIQYSNHRELKTDNLPNQARAQAALQAVSAVQSGNLSLPGATSNEGTLLPGQSPVLRIIIENLFYPVTLEVLHQIFSKFGTVLKIITFTKNNQFQALLQYADPVNAQYAKMALDGQNIYNACCTLRIDFSKLTSLNVKYNNDKSRDFTRLDLPTGDGQPSLEPPMAAAFGAPGIMSSPYAGAAGFAPAIAFPQAAGLSVSAVPGALGPLTLTSSAVSGRMAIPGASGIPGNSVLLVTNLNPDFITPHGLFILFGVYGDVHRVKIMFNKKENALVQMADASQAQIAMNHLSGQRLYGKVLRATLSKHQAVQLPREGQEDQGLTKDFSNSPLHRFKKPGSKNFQNIFPPSATLHLSNIPPSVTMDDLKNLFTEAGCSVKAFKFFQKDRKMALIQLGSVEEAIQALIELHNHDLGENHHLRVSFSKSTI</sequence>
<name>PTBP3_RAT</name>
<protein>
    <recommendedName>
        <fullName>Polypyrimidine tract-binding protein 3</fullName>
    </recommendedName>
    <alternativeName>
        <fullName>Regulator of differentiation 1</fullName>
        <shortName>Rod1</shortName>
    </alternativeName>
</protein>
<organism>
    <name type="scientific">Rattus norvegicus</name>
    <name type="common">Rat</name>
    <dbReference type="NCBI Taxonomy" id="10116"/>
    <lineage>
        <taxon>Eukaryota</taxon>
        <taxon>Metazoa</taxon>
        <taxon>Chordata</taxon>
        <taxon>Craniata</taxon>
        <taxon>Vertebrata</taxon>
        <taxon>Euteleostomi</taxon>
        <taxon>Mammalia</taxon>
        <taxon>Eutheria</taxon>
        <taxon>Euarchontoglires</taxon>
        <taxon>Glires</taxon>
        <taxon>Rodentia</taxon>
        <taxon>Myomorpha</taxon>
        <taxon>Muroidea</taxon>
        <taxon>Muridae</taxon>
        <taxon>Murinae</taxon>
        <taxon>Rattus</taxon>
    </lineage>
</organism>
<accession>Q9Z118</accession>